<protein>
    <recommendedName>
        <fullName evidence="1">Large ribosomal subunit protein bL12</fullName>
    </recommendedName>
    <alternativeName>
        <fullName evidence="2">50S ribosomal protein L7/L12</fullName>
    </alternativeName>
</protein>
<gene>
    <name evidence="1" type="primary">rplL</name>
    <name type="ordered locus">Mfl601</name>
</gene>
<dbReference type="EMBL" id="AE017263">
    <property type="protein sequence ID" value="AAT75959.1"/>
    <property type="molecule type" value="Genomic_DNA"/>
</dbReference>
<dbReference type="RefSeq" id="WP_011183499.1">
    <property type="nucleotide sequence ID" value="NC_006055.1"/>
</dbReference>
<dbReference type="RefSeq" id="YP_053843.1">
    <property type="nucleotide sequence ID" value="NC_006055.1"/>
</dbReference>
<dbReference type="SMR" id="Q6F0L4"/>
<dbReference type="STRING" id="265311.Mfl601"/>
<dbReference type="PaxDb" id="265311-Mfl601"/>
<dbReference type="EnsemblBacteria" id="AAT75959">
    <property type="protein sequence ID" value="AAT75959"/>
    <property type="gene ID" value="Mfl601"/>
</dbReference>
<dbReference type="GeneID" id="2897798"/>
<dbReference type="KEGG" id="mfl:Mfl601"/>
<dbReference type="PATRIC" id="fig|265311.5.peg.605"/>
<dbReference type="eggNOG" id="COG0222">
    <property type="taxonomic scope" value="Bacteria"/>
</dbReference>
<dbReference type="HOGENOM" id="CLU_086499_3_2_14"/>
<dbReference type="OrthoDB" id="9811748at2"/>
<dbReference type="Proteomes" id="UP000006647">
    <property type="component" value="Chromosome"/>
</dbReference>
<dbReference type="GO" id="GO:0022625">
    <property type="term" value="C:cytosolic large ribosomal subunit"/>
    <property type="evidence" value="ECO:0007669"/>
    <property type="project" value="TreeGrafter"/>
</dbReference>
<dbReference type="GO" id="GO:0003729">
    <property type="term" value="F:mRNA binding"/>
    <property type="evidence" value="ECO:0007669"/>
    <property type="project" value="TreeGrafter"/>
</dbReference>
<dbReference type="GO" id="GO:0003735">
    <property type="term" value="F:structural constituent of ribosome"/>
    <property type="evidence" value="ECO:0007669"/>
    <property type="project" value="InterPro"/>
</dbReference>
<dbReference type="GO" id="GO:0006412">
    <property type="term" value="P:translation"/>
    <property type="evidence" value="ECO:0007669"/>
    <property type="project" value="UniProtKB-UniRule"/>
</dbReference>
<dbReference type="FunFam" id="3.30.1390.10:FF:000001">
    <property type="entry name" value="50S ribosomal protein L7/L12"/>
    <property type="match status" value="1"/>
</dbReference>
<dbReference type="Gene3D" id="3.30.1390.10">
    <property type="match status" value="1"/>
</dbReference>
<dbReference type="Gene3D" id="1.20.5.710">
    <property type="entry name" value="Single helix bin"/>
    <property type="match status" value="1"/>
</dbReference>
<dbReference type="HAMAP" id="MF_00368">
    <property type="entry name" value="Ribosomal_bL12"/>
    <property type="match status" value="1"/>
</dbReference>
<dbReference type="InterPro" id="IPR000206">
    <property type="entry name" value="Ribosomal_bL12"/>
</dbReference>
<dbReference type="InterPro" id="IPR013823">
    <property type="entry name" value="Ribosomal_bL12_C"/>
</dbReference>
<dbReference type="InterPro" id="IPR014719">
    <property type="entry name" value="Ribosomal_bL12_C/ClpS-like"/>
</dbReference>
<dbReference type="InterPro" id="IPR008932">
    <property type="entry name" value="Ribosomal_bL12_oligo"/>
</dbReference>
<dbReference type="InterPro" id="IPR036235">
    <property type="entry name" value="Ribosomal_bL12_oligo_N_sf"/>
</dbReference>
<dbReference type="NCBIfam" id="TIGR00855">
    <property type="entry name" value="L12"/>
    <property type="match status" value="1"/>
</dbReference>
<dbReference type="PANTHER" id="PTHR45987">
    <property type="entry name" value="39S RIBOSOMAL PROTEIN L12"/>
    <property type="match status" value="1"/>
</dbReference>
<dbReference type="PANTHER" id="PTHR45987:SF4">
    <property type="entry name" value="LARGE RIBOSOMAL SUBUNIT PROTEIN BL12M"/>
    <property type="match status" value="1"/>
</dbReference>
<dbReference type="Pfam" id="PF00542">
    <property type="entry name" value="Ribosomal_L12"/>
    <property type="match status" value="1"/>
</dbReference>
<dbReference type="Pfam" id="PF16320">
    <property type="entry name" value="Ribosomal_L12_N"/>
    <property type="match status" value="1"/>
</dbReference>
<dbReference type="SUPFAM" id="SSF54736">
    <property type="entry name" value="ClpS-like"/>
    <property type="match status" value="1"/>
</dbReference>
<dbReference type="SUPFAM" id="SSF48300">
    <property type="entry name" value="Ribosomal protein L7/12, oligomerisation (N-terminal) domain"/>
    <property type="match status" value="1"/>
</dbReference>
<comment type="function">
    <text evidence="1">Forms part of the ribosomal stalk which helps the ribosome interact with GTP-bound translation factors. Is thus essential for accurate translation.</text>
</comment>
<comment type="subunit">
    <text evidence="1">Homodimer. Part of the ribosomal stalk of the 50S ribosomal subunit. Forms a multimeric L10(L12)X complex, where L10 forms an elongated spine to which 2 to 4 L12 dimers bind in a sequential fashion. Binds GTP-bound translation factors.</text>
</comment>
<comment type="similarity">
    <text evidence="1">Belongs to the bacterial ribosomal protein bL12 family.</text>
</comment>
<evidence type="ECO:0000255" key="1">
    <source>
        <dbReference type="HAMAP-Rule" id="MF_00368"/>
    </source>
</evidence>
<evidence type="ECO:0000305" key="2"/>
<feature type="chain" id="PRO_1000195805" description="Large ribosomal subunit protein bL12">
    <location>
        <begin position="1"/>
        <end position="122"/>
    </location>
</feature>
<reference key="1">
    <citation type="submission" date="2004-06" db="EMBL/GenBank/DDBJ databases">
        <authorList>
            <person name="Birren B.W."/>
            <person name="Stange-Thomann N."/>
            <person name="Hafez N."/>
            <person name="DeCaprio D."/>
            <person name="Fisher S."/>
            <person name="Butler J."/>
            <person name="Elkins T."/>
            <person name="Kodira C.D."/>
            <person name="Major J."/>
            <person name="Wang S."/>
            <person name="Nicol R."/>
            <person name="Nusbaum C."/>
        </authorList>
    </citation>
    <scope>NUCLEOTIDE SEQUENCE [LARGE SCALE GENOMIC DNA]</scope>
    <source>
        <strain>ATCC 33453 / NBRC 100688 / NCTC 11704 / L1</strain>
    </source>
</reference>
<keyword id="KW-1185">Reference proteome</keyword>
<keyword id="KW-0687">Ribonucleoprotein</keyword>
<keyword id="KW-0689">Ribosomal protein</keyword>
<proteinExistence type="inferred from homology"/>
<accession>Q6F0L4</accession>
<name>RL7_MESFL</name>
<sequence length="122" mass="12681">MAITKEDIIKALEEMKLTELNELVKAIEEHFDVVASAGVAVAAGPAVADAAPSEVAIMLTNAGGQKVAVIKVVKEVTGLGLMDAKKLVDGTLPVAIKENVKIEEADAIKAQLIEAGASVEYK</sequence>
<organism>
    <name type="scientific">Mesoplasma florum (strain ATCC 33453 / NBRC 100688 / NCTC 11704 / L1)</name>
    <name type="common">Acholeplasma florum</name>
    <dbReference type="NCBI Taxonomy" id="265311"/>
    <lineage>
        <taxon>Bacteria</taxon>
        <taxon>Bacillati</taxon>
        <taxon>Mycoplasmatota</taxon>
        <taxon>Mollicutes</taxon>
        <taxon>Entomoplasmatales</taxon>
        <taxon>Entomoplasmataceae</taxon>
        <taxon>Mesoplasma</taxon>
    </lineage>
</organism>